<feature type="chain" id="PRO_0000276347" description="Large ribosomal subunit protein uL14c">
    <location>
        <begin position="1"/>
        <end position="122"/>
    </location>
</feature>
<name>RK14_GOSHI</name>
<protein>
    <recommendedName>
        <fullName evidence="1">Large ribosomal subunit protein uL14c</fullName>
    </recommendedName>
    <alternativeName>
        <fullName evidence="2">50S ribosomal protein L14, chloroplastic</fullName>
    </alternativeName>
</protein>
<comment type="function">
    <text evidence="1">Binds to 23S rRNA.</text>
</comment>
<comment type="subunit">
    <text evidence="1">Part of the 50S ribosomal subunit.</text>
</comment>
<comment type="subcellular location">
    <subcellularLocation>
        <location>Plastid</location>
        <location>Chloroplast</location>
    </subcellularLocation>
</comment>
<comment type="similarity">
    <text evidence="1">Belongs to the universal ribosomal protein uL14 family.</text>
</comment>
<dbReference type="EMBL" id="DQ345959">
    <property type="protein sequence ID" value="ABC73663.1"/>
    <property type="molecule type" value="Genomic_DNA"/>
</dbReference>
<dbReference type="RefSeq" id="YP_538972.1">
    <property type="nucleotide sequence ID" value="NC_007944.1"/>
</dbReference>
<dbReference type="SMR" id="Q2L941"/>
<dbReference type="GeneID" id="3989140"/>
<dbReference type="KEGG" id="ghi:3989140"/>
<dbReference type="OrthoDB" id="61288at41938"/>
<dbReference type="Proteomes" id="UP000189702">
    <property type="component" value="Chloroplast Pltd"/>
</dbReference>
<dbReference type="GO" id="GO:0009507">
    <property type="term" value="C:chloroplast"/>
    <property type="evidence" value="ECO:0007669"/>
    <property type="project" value="UniProtKB-SubCell"/>
</dbReference>
<dbReference type="GO" id="GO:0022625">
    <property type="term" value="C:cytosolic large ribosomal subunit"/>
    <property type="evidence" value="ECO:0000318"/>
    <property type="project" value="GO_Central"/>
</dbReference>
<dbReference type="GO" id="GO:0070180">
    <property type="term" value="F:large ribosomal subunit rRNA binding"/>
    <property type="evidence" value="ECO:0000318"/>
    <property type="project" value="GO_Central"/>
</dbReference>
<dbReference type="GO" id="GO:0003735">
    <property type="term" value="F:structural constituent of ribosome"/>
    <property type="evidence" value="ECO:0000318"/>
    <property type="project" value="GO_Central"/>
</dbReference>
<dbReference type="GO" id="GO:0006412">
    <property type="term" value="P:translation"/>
    <property type="evidence" value="ECO:0007669"/>
    <property type="project" value="UniProtKB-UniRule"/>
</dbReference>
<dbReference type="CDD" id="cd00337">
    <property type="entry name" value="Ribosomal_uL14"/>
    <property type="match status" value="1"/>
</dbReference>
<dbReference type="FunFam" id="2.40.150.20:FF:000002">
    <property type="entry name" value="50S ribosomal protein L14, chloroplastic"/>
    <property type="match status" value="1"/>
</dbReference>
<dbReference type="Gene3D" id="2.40.150.20">
    <property type="entry name" value="Ribosomal protein L14"/>
    <property type="match status" value="1"/>
</dbReference>
<dbReference type="HAMAP" id="MF_01367">
    <property type="entry name" value="Ribosomal_uL14"/>
    <property type="match status" value="1"/>
</dbReference>
<dbReference type="InterPro" id="IPR000218">
    <property type="entry name" value="Ribosomal_uL14"/>
</dbReference>
<dbReference type="InterPro" id="IPR005745">
    <property type="entry name" value="Ribosomal_uL14_bac-type"/>
</dbReference>
<dbReference type="InterPro" id="IPR019972">
    <property type="entry name" value="Ribosomal_uL14_CS"/>
</dbReference>
<dbReference type="InterPro" id="IPR036853">
    <property type="entry name" value="Ribosomal_uL14_sf"/>
</dbReference>
<dbReference type="NCBIfam" id="TIGR01067">
    <property type="entry name" value="rplN_bact"/>
    <property type="match status" value="1"/>
</dbReference>
<dbReference type="PANTHER" id="PTHR11761">
    <property type="entry name" value="50S/60S RIBOSOMAL PROTEIN L14/L23"/>
    <property type="match status" value="1"/>
</dbReference>
<dbReference type="PANTHER" id="PTHR11761:SF3">
    <property type="entry name" value="LARGE RIBOSOMAL SUBUNIT PROTEIN UL14M"/>
    <property type="match status" value="1"/>
</dbReference>
<dbReference type="Pfam" id="PF00238">
    <property type="entry name" value="Ribosomal_L14"/>
    <property type="match status" value="1"/>
</dbReference>
<dbReference type="SMART" id="SM01374">
    <property type="entry name" value="Ribosomal_L14"/>
    <property type="match status" value="1"/>
</dbReference>
<dbReference type="SUPFAM" id="SSF50193">
    <property type="entry name" value="Ribosomal protein L14"/>
    <property type="match status" value="1"/>
</dbReference>
<dbReference type="PROSITE" id="PS00049">
    <property type="entry name" value="RIBOSOMAL_L14"/>
    <property type="match status" value="1"/>
</dbReference>
<evidence type="ECO:0000255" key="1">
    <source>
        <dbReference type="HAMAP-Rule" id="MF_01367"/>
    </source>
</evidence>
<evidence type="ECO:0000305" key="2"/>
<keyword id="KW-0150">Chloroplast</keyword>
<keyword id="KW-0934">Plastid</keyword>
<keyword id="KW-1185">Reference proteome</keyword>
<keyword id="KW-0687">Ribonucleoprotein</keyword>
<keyword id="KW-0689">Ribosomal protein</keyword>
<keyword id="KW-0694">RNA-binding</keyword>
<keyword id="KW-0699">rRNA-binding</keyword>
<proteinExistence type="inferred from homology"/>
<reference key="1">
    <citation type="journal article" date="2006" name="BMC Genomics">
        <title>The complete chloroplast genome sequence of Gossypium hirsutum: organization and phylogenetic relationships to other angiosperms.</title>
        <authorList>
            <person name="Lee S.-B."/>
            <person name="Kaittanis C."/>
            <person name="Jansen R.K."/>
            <person name="Hostetler J.B."/>
            <person name="Tallon L.J."/>
            <person name="Town C.D."/>
            <person name="Daniell H."/>
        </authorList>
    </citation>
    <scope>NUCLEOTIDE SEQUENCE [LARGE SCALE GENOMIC DNA]</scope>
    <source>
        <strain>cv. Coker 310FR</strain>
    </source>
</reference>
<geneLocation type="chloroplast"/>
<sequence length="122" mass="13600">MIQPQTHLNVADNSGARELMCIRVIGASNRRYAHIGDVIVAVIKEAVPNTPLERSEVIRAVIVRTRKELKRDNGMIIRYDDNAAVVIDQEGNPKGTRIFGAIARELRQLNFTKIVSLAPEVL</sequence>
<organism>
    <name type="scientific">Gossypium hirsutum</name>
    <name type="common">Upland cotton</name>
    <name type="synonym">Gossypium mexicanum</name>
    <dbReference type="NCBI Taxonomy" id="3635"/>
    <lineage>
        <taxon>Eukaryota</taxon>
        <taxon>Viridiplantae</taxon>
        <taxon>Streptophyta</taxon>
        <taxon>Embryophyta</taxon>
        <taxon>Tracheophyta</taxon>
        <taxon>Spermatophyta</taxon>
        <taxon>Magnoliopsida</taxon>
        <taxon>eudicotyledons</taxon>
        <taxon>Gunneridae</taxon>
        <taxon>Pentapetalae</taxon>
        <taxon>rosids</taxon>
        <taxon>malvids</taxon>
        <taxon>Malvales</taxon>
        <taxon>Malvaceae</taxon>
        <taxon>Malvoideae</taxon>
        <taxon>Gossypium</taxon>
    </lineage>
</organism>
<accession>Q2L941</accession>
<gene>
    <name evidence="1" type="primary">rpl14</name>
</gene>